<accession>O60330</accession>
<accession>O15100</accession>
<accession>Q6UW70</accession>
<accession>Q9Y5D7</accession>
<dbReference type="EMBL" id="AF152321">
    <property type="protein sequence ID" value="AAD43715.1"/>
    <property type="molecule type" value="mRNA"/>
</dbReference>
<dbReference type="EMBL" id="AF152506">
    <property type="protein sequence ID" value="AAD43767.1"/>
    <property type="molecule type" value="mRNA"/>
</dbReference>
<dbReference type="EMBL" id="AB011160">
    <property type="protein sequence ID" value="BAA25514.2"/>
    <property type="status" value="ALT_INIT"/>
    <property type="molecule type" value="mRNA"/>
</dbReference>
<dbReference type="EMBL" id="AY358946">
    <property type="protein sequence ID" value="AAQ89305.1"/>
    <property type="status" value="ALT_SEQ"/>
    <property type="molecule type" value="mRNA"/>
</dbReference>
<dbReference type="EMBL" id="AB000897">
    <property type="protein sequence ID" value="BAA21135.1"/>
    <property type="molecule type" value="mRNA"/>
</dbReference>
<dbReference type="CCDS" id="CCDS4260.1">
    <molecule id="O60330-1"/>
</dbReference>
<dbReference type="CCDS" id="CCDS75346.1">
    <molecule id="O60330-2"/>
</dbReference>
<dbReference type="PIR" id="PC4299">
    <property type="entry name" value="PC4299"/>
</dbReference>
<dbReference type="RefSeq" id="NP_003726.1">
    <molecule id="O60330-1"/>
    <property type="nucleotide sequence ID" value="NM_003735.3"/>
</dbReference>
<dbReference type="RefSeq" id="NP_115265.1">
    <molecule id="O60330-2"/>
    <property type="nucleotide sequence ID" value="NM_032094.2"/>
</dbReference>
<dbReference type="SMR" id="O60330"/>
<dbReference type="BioGRID" id="117494">
    <property type="interactions" value="10"/>
</dbReference>
<dbReference type="FunCoup" id="O60330">
    <property type="interactions" value="66"/>
</dbReference>
<dbReference type="IntAct" id="O60330">
    <property type="interactions" value="8"/>
</dbReference>
<dbReference type="STRING" id="9606.ENSP00000252085"/>
<dbReference type="GlyCosmos" id="O60330">
    <property type="glycosylation" value="4 sites, 1 glycan"/>
</dbReference>
<dbReference type="GlyGen" id="O60330">
    <property type="glycosylation" value="4 sites, 1 O-linked glycan (1 site)"/>
</dbReference>
<dbReference type="iPTMnet" id="O60330"/>
<dbReference type="PhosphoSitePlus" id="O60330"/>
<dbReference type="BioMuta" id="PCDHGA12"/>
<dbReference type="jPOST" id="O60330"/>
<dbReference type="MassIVE" id="O60330"/>
<dbReference type="PaxDb" id="9606-ENSP00000252085"/>
<dbReference type="PeptideAtlas" id="O60330"/>
<dbReference type="ProteomicsDB" id="49346">
    <molecule id="O60330-1"/>
</dbReference>
<dbReference type="ProteomicsDB" id="49347">
    <molecule id="O60330-2"/>
</dbReference>
<dbReference type="Antibodypedia" id="57527">
    <property type="antibodies" value="17 antibodies from 6 providers"/>
</dbReference>
<dbReference type="DNASU" id="26025"/>
<dbReference type="Ensembl" id="ENST00000252085.4">
    <molecule id="O60330-1"/>
    <property type="protein sequence ID" value="ENSP00000252085.3"/>
    <property type="gene ID" value="ENSG00000253159.3"/>
</dbReference>
<dbReference type="Ensembl" id="ENST00000613314.1">
    <molecule id="O60330-2"/>
    <property type="protein sequence ID" value="ENSP00000481438.1"/>
    <property type="gene ID" value="ENSG00000253159.3"/>
</dbReference>
<dbReference type="GeneID" id="26025"/>
<dbReference type="KEGG" id="hsa:26025"/>
<dbReference type="MANE-Select" id="ENST00000252085.4">
    <property type="protein sequence ID" value="ENSP00000252085.3"/>
    <property type="RefSeq nucleotide sequence ID" value="NM_003735.3"/>
    <property type="RefSeq protein sequence ID" value="NP_003726.1"/>
</dbReference>
<dbReference type="UCSC" id="uc003lkt.3">
    <molecule id="O60330-1"/>
    <property type="organism name" value="human"/>
</dbReference>
<dbReference type="AGR" id="HGNC:8699"/>
<dbReference type="CTD" id="26025"/>
<dbReference type="DisGeNET" id="26025"/>
<dbReference type="GeneCards" id="PCDHGA12"/>
<dbReference type="HGNC" id="HGNC:8699">
    <property type="gene designation" value="PCDHGA12"/>
</dbReference>
<dbReference type="HPA" id="ENSG00000253159">
    <property type="expression patterns" value="Tissue enhanced (brain)"/>
</dbReference>
<dbReference type="MalaCards" id="PCDHGA12"/>
<dbReference type="MIM" id="603059">
    <property type="type" value="gene"/>
</dbReference>
<dbReference type="MIM" id="604968">
    <property type="type" value="gene"/>
</dbReference>
<dbReference type="neXtProt" id="NX_O60330"/>
<dbReference type="OpenTargets" id="ENSG00000253159"/>
<dbReference type="PharmGKB" id="PA33047"/>
<dbReference type="VEuPathDB" id="HostDB:ENSG00000253159"/>
<dbReference type="eggNOG" id="KOG3594">
    <property type="taxonomic scope" value="Eukaryota"/>
</dbReference>
<dbReference type="GeneTree" id="ENSGT00940000164062"/>
<dbReference type="HOGENOM" id="CLU_006480_3_0_1"/>
<dbReference type="InParanoid" id="O60330"/>
<dbReference type="OMA" id="YWAYIPE"/>
<dbReference type="OrthoDB" id="6252479at2759"/>
<dbReference type="PAN-GO" id="O60330">
    <property type="GO annotations" value="2 GO annotations based on evolutionary models"/>
</dbReference>
<dbReference type="PhylomeDB" id="O60330"/>
<dbReference type="TreeFam" id="TF332299"/>
<dbReference type="PathwayCommons" id="O60330"/>
<dbReference type="SignaLink" id="O60330"/>
<dbReference type="SIGNOR" id="O60330"/>
<dbReference type="BioGRID-ORCS" id="26025">
    <property type="hits" value="10 hits in 1094 CRISPR screens"/>
</dbReference>
<dbReference type="GeneWiki" id="PCDHGA12"/>
<dbReference type="GenomeRNAi" id="26025"/>
<dbReference type="Pharos" id="O60330">
    <property type="development level" value="Tdark"/>
</dbReference>
<dbReference type="PRO" id="PR:O60330"/>
<dbReference type="Proteomes" id="UP000005640">
    <property type="component" value="Chromosome 5"/>
</dbReference>
<dbReference type="RNAct" id="O60330">
    <property type="molecule type" value="protein"/>
</dbReference>
<dbReference type="Bgee" id="ENSG00000253159">
    <property type="expression patterns" value="Expressed in stromal cell of endometrium and 97 other cell types or tissues"/>
</dbReference>
<dbReference type="GO" id="GO:0005911">
    <property type="term" value="C:cell-cell junction"/>
    <property type="evidence" value="ECO:0007669"/>
    <property type="project" value="Ensembl"/>
</dbReference>
<dbReference type="GO" id="GO:0005886">
    <property type="term" value="C:plasma membrane"/>
    <property type="evidence" value="ECO:0000318"/>
    <property type="project" value="GO_Central"/>
</dbReference>
<dbReference type="GO" id="GO:0005509">
    <property type="term" value="F:calcium ion binding"/>
    <property type="evidence" value="ECO:0007669"/>
    <property type="project" value="InterPro"/>
</dbReference>
<dbReference type="GO" id="GO:0007155">
    <property type="term" value="P:cell adhesion"/>
    <property type="evidence" value="ECO:0000318"/>
    <property type="project" value="GO_Central"/>
</dbReference>
<dbReference type="GO" id="GO:0007156">
    <property type="term" value="P:homophilic cell adhesion via plasma membrane adhesion molecules"/>
    <property type="evidence" value="ECO:0007669"/>
    <property type="project" value="InterPro"/>
</dbReference>
<dbReference type="GO" id="GO:0007399">
    <property type="term" value="P:nervous system development"/>
    <property type="evidence" value="ECO:0007669"/>
    <property type="project" value="UniProtKB-ARBA"/>
</dbReference>
<dbReference type="CDD" id="cd11304">
    <property type="entry name" value="Cadherin_repeat"/>
    <property type="match status" value="6"/>
</dbReference>
<dbReference type="FunFam" id="2.60.40.60:FF:000004">
    <property type="entry name" value="Protocadherin 1 gamma 2"/>
    <property type="match status" value="1"/>
</dbReference>
<dbReference type="FunFam" id="2.60.40.60:FF:000001">
    <property type="entry name" value="Protocadherin alpha 2"/>
    <property type="match status" value="1"/>
</dbReference>
<dbReference type="FunFam" id="2.60.40.60:FF:000002">
    <property type="entry name" value="Protocadherin alpha 2"/>
    <property type="match status" value="1"/>
</dbReference>
<dbReference type="FunFam" id="2.60.40.60:FF:000006">
    <property type="entry name" value="Protocadherin alpha 2"/>
    <property type="match status" value="1"/>
</dbReference>
<dbReference type="FunFam" id="2.60.40.60:FF:000129">
    <property type="entry name" value="protocadherin alpha-C2 isoform X1"/>
    <property type="match status" value="1"/>
</dbReference>
<dbReference type="FunFam" id="2.60.40.60:FF:000018">
    <property type="entry name" value="Protocadherin gamma c3"/>
    <property type="match status" value="1"/>
</dbReference>
<dbReference type="Gene3D" id="2.60.40.60">
    <property type="entry name" value="Cadherins"/>
    <property type="match status" value="6"/>
</dbReference>
<dbReference type="InterPro" id="IPR002126">
    <property type="entry name" value="Cadherin-like_dom"/>
</dbReference>
<dbReference type="InterPro" id="IPR015919">
    <property type="entry name" value="Cadherin-like_sf"/>
</dbReference>
<dbReference type="InterPro" id="IPR032455">
    <property type="entry name" value="Cadherin_C"/>
</dbReference>
<dbReference type="InterPro" id="IPR031904">
    <property type="entry name" value="Cadherin_CBD"/>
</dbReference>
<dbReference type="InterPro" id="IPR020894">
    <property type="entry name" value="Cadherin_CS"/>
</dbReference>
<dbReference type="InterPro" id="IPR013164">
    <property type="entry name" value="Cadherin_N"/>
</dbReference>
<dbReference type="InterPro" id="IPR050174">
    <property type="entry name" value="Protocadherin/Cadherin-CA"/>
</dbReference>
<dbReference type="PANTHER" id="PTHR24028">
    <property type="entry name" value="CADHERIN-87A"/>
    <property type="match status" value="1"/>
</dbReference>
<dbReference type="PANTHER" id="PTHR24028:SF227">
    <property type="entry name" value="PROTOCADHERIN GAMMA-A12"/>
    <property type="match status" value="1"/>
</dbReference>
<dbReference type="Pfam" id="PF00028">
    <property type="entry name" value="Cadherin"/>
    <property type="match status" value="5"/>
</dbReference>
<dbReference type="Pfam" id="PF08266">
    <property type="entry name" value="Cadherin_2"/>
    <property type="match status" value="1"/>
</dbReference>
<dbReference type="Pfam" id="PF16492">
    <property type="entry name" value="Cadherin_C_2"/>
    <property type="match status" value="1"/>
</dbReference>
<dbReference type="Pfam" id="PF15974">
    <property type="entry name" value="Cadherin_tail"/>
    <property type="match status" value="1"/>
</dbReference>
<dbReference type="PRINTS" id="PR00205">
    <property type="entry name" value="CADHERIN"/>
</dbReference>
<dbReference type="SMART" id="SM00112">
    <property type="entry name" value="CA"/>
    <property type="match status" value="6"/>
</dbReference>
<dbReference type="SUPFAM" id="SSF49313">
    <property type="entry name" value="Cadherin-like"/>
    <property type="match status" value="6"/>
</dbReference>
<dbReference type="PROSITE" id="PS00232">
    <property type="entry name" value="CADHERIN_1"/>
    <property type="match status" value="5"/>
</dbReference>
<dbReference type="PROSITE" id="PS50268">
    <property type="entry name" value="CADHERIN_2"/>
    <property type="match status" value="6"/>
</dbReference>
<keyword id="KW-0025">Alternative splicing</keyword>
<keyword id="KW-0106">Calcium</keyword>
<keyword id="KW-0130">Cell adhesion</keyword>
<keyword id="KW-1003">Cell membrane</keyword>
<keyword id="KW-0325">Glycoprotein</keyword>
<keyword id="KW-0472">Membrane</keyword>
<keyword id="KW-1267">Proteomics identification</keyword>
<keyword id="KW-1185">Reference proteome</keyword>
<keyword id="KW-0677">Repeat</keyword>
<keyword id="KW-0732">Signal</keyword>
<keyword id="KW-0812">Transmembrane</keyword>
<keyword id="KW-1133">Transmembrane helix</keyword>
<gene>
    <name type="primary">PCDHGA12</name>
    <name type="synonym">CDH21</name>
    <name type="synonym">FIB3</name>
    <name type="synonym">KIAA0588</name>
    <name type="ORF">UNQ371/PRO707</name>
</gene>
<evidence type="ECO:0000250" key="1"/>
<evidence type="ECO:0000255" key="2"/>
<evidence type="ECO:0000255" key="3">
    <source>
        <dbReference type="PROSITE-ProRule" id="PRU00043"/>
    </source>
</evidence>
<evidence type="ECO:0000256" key="4">
    <source>
        <dbReference type="SAM" id="MobiDB-lite"/>
    </source>
</evidence>
<evidence type="ECO:0000303" key="5">
    <source>
    </source>
</evidence>
<evidence type="ECO:0000305" key="6"/>
<proteinExistence type="evidence at protein level"/>
<organism>
    <name type="scientific">Homo sapiens</name>
    <name type="common">Human</name>
    <dbReference type="NCBI Taxonomy" id="9606"/>
    <lineage>
        <taxon>Eukaryota</taxon>
        <taxon>Metazoa</taxon>
        <taxon>Chordata</taxon>
        <taxon>Craniata</taxon>
        <taxon>Vertebrata</taxon>
        <taxon>Euteleostomi</taxon>
        <taxon>Mammalia</taxon>
        <taxon>Eutheria</taxon>
        <taxon>Euarchontoglires</taxon>
        <taxon>Primates</taxon>
        <taxon>Haplorrhini</taxon>
        <taxon>Catarrhini</taxon>
        <taxon>Hominidae</taxon>
        <taxon>Homo</taxon>
    </lineage>
</organism>
<protein>
    <recommendedName>
        <fullName>Protocadherin gamma-A12</fullName>
        <shortName>PCDH-gamma-A12</shortName>
    </recommendedName>
    <alternativeName>
        <fullName>Cadherin-21</fullName>
    </alternativeName>
    <alternativeName>
        <fullName>Fibroblast cadherin-3</fullName>
    </alternativeName>
</protein>
<comment type="function">
    <text>Potential calcium-dependent cell-adhesion protein. May be involved in the establishment and maintenance of specific neuronal connections in the brain.</text>
</comment>
<comment type="subcellular location">
    <subcellularLocation>
        <location evidence="1">Cell membrane</location>
        <topology evidence="1">Single-pass type I membrane protein</topology>
    </subcellularLocation>
</comment>
<comment type="alternative products">
    <event type="alternative splicing"/>
    <isoform>
        <id>O60330-1</id>
        <name>1</name>
        <sequence type="displayed"/>
    </isoform>
    <isoform>
        <id>O60330-2</id>
        <name>2</name>
        <name>Short</name>
        <sequence type="described" ref="VSP_008682 VSP_008683"/>
    </isoform>
</comment>
<comment type="sequence caution" evidence="6">
    <conflict type="miscellaneous discrepancy">
        <sequence resource="EMBL-CDS" id="AAQ89305"/>
    </conflict>
    <text>Probable cloning artifact.</text>
</comment>
<comment type="sequence caution" evidence="6">
    <conflict type="erroneous initiation">
        <sequence resource="EMBL-CDS" id="BAA25514"/>
    </conflict>
    <text>Extended N-terminus.</text>
</comment>
<name>PCDGC_HUMAN</name>
<reference key="1">
    <citation type="journal article" date="1999" name="Cell">
        <title>A striking organization of a large family of human neural cadherin-like cell adhesion genes.</title>
        <authorList>
            <person name="Wu Q."/>
            <person name="Maniatis T."/>
        </authorList>
    </citation>
    <scope>NUCLEOTIDE SEQUENCE [MRNA] (ISOFORMS 1 AND 2)</scope>
    <source>
        <tissue>Brain</tissue>
    </source>
</reference>
<reference key="2">
    <citation type="journal article" date="1998" name="DNA Res.">
        <title>Prediction of the coding sequences of unidentified human genes. IX. The complete sequences of 100 new cDNA clones from brain which can code for large proteins in vitro.</title>
        <authorList>
            <person name="Nagase T."/>
            <person name="Ishikawa K."/>
            <person name="Miyajima N."/>
            <person name="Tanaka A."/>
            <person name="Kotani H."/>
            <person name="Nomura N."/>
            <person name="Ohara O."/>
        </authorList>
    </citation>
    <scope>NUCLEOTIDE SEQUENCE [LARGE SCALE MRNA] (ISOFORM 1)</scope>
    <source>
        <tissue>Brain</tissue>
    </source>
</reference>
<reference key="3">
    <citation type="journal article" date="2003" name="Genome Res.">
        <title>The secreted protein discovery initiative (SPDI), a large-scale effort to identify novel human secreted and transmembrane proteins: a bioinformatics assessment.</title>
        <authorList>
            <person name="Clark H.F."/>
            <person name="Gurney A.L."/>
            <person name="Abaya E."/>
            <person name="Baker K."/>
            <person name="Baldwin D.T."/>
            <person name="Brush J."/>
            <person name="Chen J."/>
            <person name="Chow B."/>
            <person name="Chui C."/>
            <person name="Crowley C."/>
            <person name="Currell B."/>
            <person name="Deuel B."/>
            <person name="Dowd P."/>
            <person name="Eaton D."/>
            <person name="Foster J.S."/>
            <person name="Grimaldi C."/>
            <person name="Gu Q."/>
            <person name="Hass P.E."/>
            <person name="Heldens S."/>
            <person name="Huang A."/>
            <person name="Kim H.S."/>
            <person name="Klimowski L."/>
            <person name="Jin Y."/>
            <person name="Johnson S."/>
            <person name="Lee J."/>
            <person name="Lewis L."/>
            <person name="Liao D."/>
            <person name="Mark M.R."/>
            <person name="Robbie E."/>
            <person name="Sanchez C."/>
            <person name="Schoenfeld J."/>
            <person name="Seshagiri S."/>
            <person name="Simmons L."/>
            <person name="Singh J."/>
            <person name="Smith V."/>
            <person name="Stinson J."/>
            <person name="Vagts A."/>
            <person name="Vandlen R.L."/>
            <person name="Watanabe C."/>
            <person name="Wieand D."/>
            <person name="Woods K."/>
            <person name="Xie M.-H."/>
            <person name="Yansura D.G."/>
            <person name="Yi S."/>
            <person name="Yu G."/>
            <person name="Yuan J."/>
            <person name="Zhang M."/>
            <person name="Zhang Z."/>
            <person name="Goddard A.D."/>
            <person name="Wood W.I."/>
            <person name="Godowski P.J."/>
            <person name="Gray A.M."/>
        </authorList>
    </citation>
    <scope>NUCLEOTIDE SEQUENCE [LARGE SCALE MRNA] OF 1-808</scope>
</reference>
<reference key="4">
    <citation type="journal article" date="1997" name="Biochem. Biophys. Res. Commun.">
        <title>Multiple cadherins are expressed in human fibroblasts.</title>
        <authorList>
            <person name="Matsuyoshi N."/>
            <person name="Imamura S."/>
        </authorList>
    </citation>
    <scope>NUCLEOTIDE SEQUENCE [MRNA] OF 311-444</scope>
</reference>
<feature type="signal peptide" evidence="2">
    <location>
        <begin position="1"/>
        <end position="29"/>
    </location>
</feature>
<feature type="chain" id="PRO_0000003970" description="Protocadherin gamma-A12">
    <location>
        <begin position="30"/>
        <end position="932"/>
    </location>
</feature>
<feature type="topological domain" description="Extracellular" evidence="2">
    <location>
        <begin position="30"/>
        <end position="692"/>
    </location>
</feature>
<feature type="transmembrane region" description="Helical" evidence="2">
    <location>
        <begin position="693"/>
        <end position="713"/>
    </location>
</feature>
<feature type="topological domain" description="Cytoplasmic" evidence="2">
    <location>
        <begin position="714"/>
        <end position="932"/>
    </location>
</feature>
<feature type="domain" description="Cadherin 1" evidence="3">
    <location>
        <begin position="30"/>
        <end position="133"/>
    </location>
</feature>
<feature type="domain" description="Cadherin 2" evidence="3">
    <location>
        <begin position="134"/>
        <end position="242"/>
    </location>
</feature>
<feature type="domain" description="Cadherin 3" evidence="3">
    <location>
        <begin position="243"/>
        <end position="347"/>
    </location>
</feature>
<feature type="domain" description="Cadherin 4" evidence="3">
    <location>
        <begin position="348"/>
        <end position="452"/>
    </location>
</feature>
<feature type="domain" description="Cadherin 5" evidence="3">
    <location>
        <begin position="453"/>
        <end position="562"/>
    </location>
</feature>
<feature type="domain" description="Cadherin 6" evidence="3">
    <location>
        <begin position="570"/>
        <end position="683"/>
    </location>
</feature>
<feature type="region of interest" description="Disordered" evidence="4">
    <location>
        <begin position="803"/>
        <end position="841"/>
    </location>
</feature>
<feature type="region of interest" description="Disordered" evidence="4">
    <location>
        <begin position="902"/>
        <end position="932"/>
    </location>
</feature>
<feature type="compositionally biased region" description="Polar residues" evidence="4">
    <location>
        <begin position="816"/>
        <end position="841"/>
    </location>
</feature>
<feature type="compositionally biased region" description="Basic residues" evidence="4">
    <location>
        <begin position="922"/>
        <end position="932"/>
    </location>
</feature>
<feature type="glycosylation site" description="N-linked (GlcNAc...) asparagine" evidence="2">
    <location>
        <position position="265"/>
    </location>
</feature>
<feature type="glycosylation site" description="N-linked (GlcNAc...) asparagine" evidence="2">
    <location>
        <position position="419"/>
    </location>
</feature>
<feature type="glycosylation site" description="N-linked (GlcNAc...) asparagine" evidence="2">
    <location>
        <position position="545"/>
    </location>
</feature>
<feature type="splice variant" id="VSP_008682" description="In isoform 2." evidence="5">
    <original>QAPPNTDWRFSQ</original>
    <variation>VSLYQIFFLFFF</variation>
    <location>
        <begin position="809"/>
        <end position="820"/>
    </location>
</feature>
<feature type="splice variant" id="VSP_008683" description="In isoform 2." evidence="5">
    <location>
        <begin position="821"/>
        <end position="932"/>
    </location>
</feature>
<feature type="sequence conflict" description="In Ref. 4; BAA21135." evidence="6" ref="4">
    <original>A</original>
    <variation>P</variation>
    <location>
        <position position="331"/>
    </location>
</feature>
<sequence>MIPARLHRDYKGLVLLGILLGTLWETGCTQIRYSVPEELEKGSRVGDISRDLGLEPRELAERGVRIIPRGRTQLFALNPRSGSLVTAGRIDREELCMGAIKCQLNLDILMEDKVKIYGVEVEVRDINDNAPYFRESELEIKISENAATEMRFPLPHAWDPDIGKNSLQSYELSPNTHFSLIVQNGADGSKYPELVLKRALDREEKAAHHLVLTASDGGDPVRTGTARIRVMVLDANDNAPAFAQPEYRASVPENLALGTQLLVVNATDPDEGVNAEVRYSFRYVDDKAAQVFKLDCNSGTISTIGELDHEESGFYQMEVQAMDNAGYSARAKVLITVLDVNDNAPEVVLTSLASSVPENSPRGTLIALLNVNDQDSEENGQVICFIQGNLPFKLEKSYGNYYSLVTDIVLDREQVPSYNITVTATDRGTPPLSTETHISLNVADTNDNPPVFPQASYSAYIPENNPRGVSLVSVTAHDPDCEENAQITYSLAENTIQGASLSSYVSINSDTGVLYALSSFDYEQFRDLQVKVMARDNGHPPLSSNVSLSLFVLDQNDNAPEILYPALPTDGSTGVELAPRSAEPGYLVTKVVAVDRDSGQNAWLSYRLLKASEPGLFSVGLHTGEVRTARALLDRDALKQSLVVAVQDHGQPPLSATVTLTVAVADSIPQVLADLGSLESPANSETSDLTLYLVVAVAAVSCVFLAFVILLLALRLRRWHKSRLLQASGGGLTGAPASHFVGVDGVQAFLQTYSHEVSLTTDSRKSHLIFPQPNYADMLVSQESFEKSEPLLLSGDSVFSKDSHGLIEQAPPNTDWRFSQAQRPGTSGSQNGDDTGTWPNNQFDTEMLQAMILASASEAADGSSTLGGGAGTMGLSARYGPQFTLQHVPDYRQNVYIPGSNATLTNAAGKRDGKAPAGGNGNKKKSGKKEKK</sequence>